<organism>
    <name type="scientific">Beet curly top virus (strain California/Logan)</name>
    <name type="common">BCTV</name>
    <dbReference type="NCBI Taxonomy" id="268960"/>
    <lineage>
        <taxon>Viruses</taxon>
        <taxon>Monodnaviria</taxon>
        <taxon>Shotokuvirae</taxon>
        <taxon>Cressdnaviricota</taxon>
        <taxon>Repensiviricetes</taxon>
        <taxon>Geplafuvirales</taxon>
        <taxon>Geminiviridae</taxon>
        <taxon>Curtovirus</taxon>
        <taxon>Beet curly top virus</taxon>
    </lineage>
</organism>
<feature type="chain" id="PRO_0000323702" description="Protein C2">
    <location>
        <begin position="1"/>
        <end position="173"/>
    </location>
</feature>
<feature type="zinc finger region" evidence="1">
    <location>
        <begin position="69"/>
        <end position="85"/>
    </location>
</feature>
<feature type="sequence variant" description="In strain: Infectious clone pBCT028.">
    <original>G</original>
    <variation>R</variation>
    <location>
        <position position="99"/>
    </location>
</feature>
<feature type="sequence variant" description="In strain: Infectious clone pBCT028.">
    <original>P</original>
    <variation>Q</variation>
    <location>
        <position position="128"/>
    </location>
</feature>
<feature type="sequence variant" description="In strain: Infectious clone pBCT028.">
    <original>N</original>
    <variation>D</variation>
    <location>
        <position position="147"/>
    </location>
</feature>
<feature type="sequence variant" description="In strain: Infectious clone pBCT028.">
    <original>R</original>
    <variation>W</variation>
    <location>
        <position position="150"/>
    </location>
</feature>
<proteinExistence type="evidence at protein level"/>
<sequence length="173" mass="19888">MENHVSLKVVSPALYYAIQDLRAHTNNFLKNQKMKPLSPGHYIIQPSANSKVRSLITKQQHPRKVTLPCNCHFTIHHECNRGFSHRGTYYSPSGNKFRGIRECTESTVYETPMVREIRANLSTEDTNPIQLQPPESVESSQVLDRANDNRIEQDIDWTPFLEGLEKETRDILG</sequence>
<accession>Q91J26</accession>
<accession>Q96634</accession>
<comment type="function">
    <text evidence="2 3 4 5 7">Acts as a suppressor of RNA-mediated gene silencing, also known as post-transcriptional gene silencing (PTGS), a mechanism of plant viral defense that limits the accumulation of viral RNAs. Suppresses the host RNA silencing by inhibiting adenosine kinase 2 (ADK2), a kinase involved in a general methylation pathway. Also suppresses the host basal defense by interacting with and inhibiting SNF1 kinase, a key regulator of cell metabolism implicated in innate antiviral defense. Determines pathogenicity.</text>
</comment>
<comment type="subunit">
    <text evidence="3 4 6">Monomer. Interacting with and inactivating host adenosine kinase 2 (ADK2) in the cytoplasm. Interacts with and inhibits host SNF1 kinase.</text>
</comment>
<comment type="subcellular location">
    <subcellularLocation>
        <location evidence="1">Host cytoplasm</location>
    </subcellularLocation>
</comment>
<comment type="domain">
    <text evidence="1">The zinc finger is involved in PTGS suppression.</text>
</comment>
<comment type="similarity">
    <text evidence="8">Belongs to the geminiviridae transcriptional activator protein family.</text>
</comment>
<name>C2_BCTVC</name>
<organismHost>
    <name type="scientific">Beta vulgaris</name>
    <name type="common">Sugar beet</name>
    <dbReference type="NCBI Taxonomy" id="161934"/>
</organismHost>
<organismHost>
    <name type="scientific">Capsicum</name>
    <name type="common">peppers</name>
    <dbReference type="NCBI Taxonomy" id="4071"/>
</organismHost>
<organismHost>
    <name type="scientific">Cucurbitaceae</name>
    <dbReference type="NCBI Taxonomy" id="3650"/>
</organismHost>
<organismHost>
    <name type="scientific">Linum</name>
    <dbReference type="NCBI Taxonomy" id="4005"/>
</organismHost>
<organismHost>
    <name type="scientific">Phaseolus vulgaris</name>
    <name type="common">Kidney bean</name>
    <name type="synonym">French bean</name>
    <dbReference type="NCBI Taxonomy" id="3885"/>
</organismHost>
<organismHost>
    <name type="scientific">Solanum lycopersicum</name>
    <name type="common">Tomato</name>
    <name type="synonym">Lycopersicon esculentum</name>
    <dbReference type="NCBI Taxonomy" id="4081"/>
</organismHost>
<organismHost>
    <name type="scientific">Solanum tuberosum</name>
    <name type="common">Potato</name>
    <dbReference type="NCBI Taxonomy" id="4113"/>
</organismHost>
<organismHost>
    <name type="scientific">Spinacia oleracea</name>
    <name type="common">Spinach</name>
    <dbReference type="NCBI Taxonomy" id="3562"/>
</organismHost>
<dbReference type="EMBL" id="M24597">
    <property type="protein sequence ID" value="AAA42755.1"/>
    <property type="molecule type" value="Genomic_DNA"/>
</dbReference>
<dbReference type="EMBL" id="AF379637">
    <property type="protein sequence ID" value="AAK59261.1"/>
    <property type="molecule type" value="Genomic_DNA"/>
</dbReference>
<dbReference type="PIR" id="S28364">
    <property type="entry name" value="S28364"/>
</dbReference>
<dbReference type="KEGG" id="vg:2546431"/>
<dbReference type="Proteomes" id="UP000006542">
    <property type="component" value="Genome"/>
</dbReference>
<dbReference type="GO" id="GO:0030430">
    <property type="term" value="C:host cell cytoplasm"/>
    <property type="evidence" value="ECO:0007669"/>
    <property type="project" value="UniProtKB-SubCell"/>
</dbReference>
<dbReference type="GO" id="GO:0019028">
    <property type="term" value="C:viral capsid"/>
    <property type="evidence" value="ECO:0007669"/>
    <property type="project" value="InterPro"/>
</dbReference>
<dbReference type="GO" id="GO:0005198">
    <property type="term" value="F:structural molecule activity"/>
    <property type="evidence" value="ECO:0007669"/>
    <property type="project" value="InterPro"/>
</dbReference>
<dbReference type="GO" id="GO:0008270">
    <property type="term" value="F:zinc ion binding"/>
    <property type="evidence" value="ECO:0007669"/>
    <property type="project" value="UniProtKB-KW"/>
</dbReference>
<dbReference type="GO" id="GO:0052170">
    <property type="term" value="P:symbiont-mediated suppression of host innate immune response"/>
    <property type="evidence" value="ECO:0007669"/>
    <property type="project" value="UniProtKB-KW"/>
</dbReference>
<dbReference type="InterPro" id="IPR000942">
    <property type="entry name" value="Gemini_AL2"/>
</dbReference>
<dbReference type="Pfam" id="PF01440">
    <property type="entry name" value="Gemini_AL2"/>
    <property type="match status" value="1"/>
</dbReference>
<evidence type="ECO:0000250" key="1"/>
<evidence type="ECO:0000269" key="2">
    <source>
    </source>
</evidence>
<evidence type="ECO:0000269" key="3">
    <source>
    </source>
</evidence>
<evidence type="ECO:0000269" key="4">
    <source>
    </source>
</evidence>
<evidence type="ECO:0000269" key="5">
    <source>
    </source>
</evidence>
<evidence type="ECO:0000269" key="6">
    <source>
    </source>
</evidence>
<evidence type="ECO:0000269" key="7">
    <source>
    </source>
</evidence>
<evidence type="ECO:0000305" key="8"/>
<protein>
    <recommendedName>
        <fullName>Protein C2</fullName>
    </recommendedName>
    <alternativeName>
        <fullName>Protein L2</fullName>
    </alternativeName>
</protein>
<reference key="1">
    <citation type="journal article" date="1986" name="EMBO J.">
        <title>The nucleotide sequence of an infectious clone of the geminivirus beet curly top virus.</title>
        <authorList>
            <person name="Stanley J."/>
            <person name="Markham P.G."/>
            <person name="Callis R.J."/>
            <person name="Pinner M.S."/>
        </authorList>
    </citation>
    <scope>NUCLEOTIDE SEQUENCE [GENOMIC DNA]</scope>
    <source>
        <strain>Infectious clone pBCT028</strain>
    </source>
</reference>
<reference key="2">
    <citation type="submission" date="2001-05" db="EMBL/GenBank/DDBJ databases">
        <authorList>
            <person name="Bisaro D.M."/>
            <person name="Hormuzdi S.G."/>
        </authorList>
    </citation>
    <scope>NUCLEOTIDE SEQUENCE [GENOMIC DNA]</scope>
</reference>
<reference key="3">
    <citation type="journal article" date="1995" name="Virology">
        <title>Genetic analysis of beet curly top virus: examination of the roles of L2 and L3 genes in viral pathogenesis.</title>
        <authorList>
            <person name="Hormuzdi S.G."/>
            <person name="Bisaro D.M."/>
        </authorList>
    </citation>
    <scope>FUNCTION</scope>
</reference>
<reference key="4">
    <citation type="journal article" date="2001" name="Virology">
        <title>Plants expressing tomato golden mosaic virus AL2 or beet curly top virus L2 transgenes show enhanced susceptibility to infection by DNA and RNA viruses.</title>
        <authorList>
            <person name="Sunter G."/>
            <person name="Sunter J.L."/>
            <person name="Bisaro D.M."/>
        </authorList>
    </citation>
    <scope>FUNCTION</scope>
</reference>
<reference key="5">
    <citation type="journal article" date="2003" name="Plant Cell">
        <title>Geminivirus AL2 and L2 proteins interact with and inactivate SNF1 kinase.</title>
        <authorList>
            <person name="Hao L."/>
            <person name="Wang H."/>
            <person name="Sunter G."/>
            <person name="Bisaro D.M."/>
        </authorList>
    </citation>
    <scope>FUNCTION</scope>
    <scope>INTERACTION WITH ARABIDOPSIS THALIANA KIN11/SNF1</scope>
</reference>
<reference key="6">
    <citation type="journal article" date="2003" name="Plant Cell">
        <title>Adenosine kinase is inactivated by geminivirus AL2 and L2 proteins.</title>
        <authorList>
            <person name="Wang H."/>
            <person name="Hao L."/>
            <person name="Shung C.-Y."/>
            <person name="Sunter G."/>
            <person name="Bisaro D.M."/>
        </authorList>
    </citation>
    <scope>FUNCTION</scope>
    <scope>INTERACTION WITH ARABIDOPSIS THALIANA ADK2</scope>
</reference>
<reference key="7">
    <citation type="journal article" date="2005" name="J. Virol.">
        <title>Adenosine kinase inhibition and suppression of RNA silencing by geminivirus AL2 and L2 proteins.</title>
        <authorList>
            <person name="Wang H."/>
            <person name="Buckley K.J."/>
            <person name="Yang X."/>
            <person name="Buchmann R.C."/>
            <person name="Bisaro D.M."/>
        </authorList>
    </citation>
    <scope>FUNCTION</scope>
</reference>
<reference key="8">
    <citation type="journal article" date="2007" name="J. Virol.">
        <title>Functional modulation of the geminivirus AL2 transcription factor and silencing suppressor by self-interaction.</title>
        <authorList>
            <person name="Yang X."/>
            <person name="Baliji S."/>
            <person name="Buchmann R.C."/>
            <person name="Wang H."/>
            <person name="Lindbo J.A."/>
            <person name="Sunter G."/>
            <person name="Bisaro D.M."/>
        </authorList>
    </citation>
    <scope>SUBUNIT</scope>
    <scope>INTERACTION WITH ARABIDOPSIS THALIANA ADK2</scope>
</reference>
<gene>
    <name type="ORF">C2</name>
    <name type="ORF">L2</name>
</gene>
<keyword id="KW-1035">Host cytoplasm</keyword>
<keyword id="KW-0945">Host-virus interaction</keyword>
<keyword id="KW-1090">Inhibition of host innate immune response by virus</keyword>
<keyword id="KW-0479">Metal-binding</keyword>
<keyword id="KW-1185">Reference proteome</keyword>
<keyword id="KW-0941">Suppressor of RNA silencing</keyword>
<keyword id="KW-0899">Viral immunoevasion</keyword>
<keyword id="KW-0862">Zinc</keyword>
<keyword id="KW-0863">Zinc-finger</keyword>